<protein>
    <recommendedName>
        <fullName evidence="1">Trigger factor</fullName>
        <shortName evidence="1">TF</shortName>
        <ecNumber evidence="1">5.2.1.8</ecNumber>
    </recommendedName>
    <alternativeName>
        <fullName evidence="1">PPIase</fullName>
    </alternativeName>
</protein>
<proteinExistence type="inferred from homology"/>
<feature type="chain" id="PRO_1000119518" description="Trigger factor">
    <location>
        <begin position="1"/>
        <end position="432"/>
    </location>
</feature>
<feature type="domain" description="PPIase FKBP-type" evidence="1">
    <location>
        <begin position="161"/>
        <end position="246"/>
    </location>
</feature>
<dbReference type="EC" id="5.2.1.8" evidence="1"/>
<dbReference type="EMBL" id="CU928163">
    <property type="protein sequence ID" value="CAR11691.1"/>
    <property type="molecule type" value="Genomic_DNA"/>
</dbReference>
<dbReference type="RefSeq" id="WP_001198386.1">
    <property type="nucleotide sequence ID" value="NC_011751.1"/>
</dbReference>
<dbReference type="RefSeq" id="YP_002411239.1">
    <property type="nucleotide sequence ID" value="NC_011751.1"/>
</dbReference>
<dbReference type="SMR" id="B7N8Z0"/>
<dbReference type="STRING" id="585056.ECUMN_0476"/>
<dbReference type="GeneID" id="75202861"/>
<dbReference type="KEGG" id="eum:ECUMN_0476"/>
<dbReference type="PATRIC" id="fig|585056.7.peg.681"/>
<dbReference type="HOGENOM" id="CLU_033058_2_0_6"/>
<dbReference type="Proteomes" id="UP000007097">
    <property type="component" value="Chromosome"/>
</dbReference>
<dbReference type="GO" id="GO:0005737">
    <property type="term" value="C:cytoplasm"/>
    <property type="evidence" value="ECO:0007669"/>
    <property type="project" value="UniProtKB-SubCell"/>
</dbReference>
<dbReference type="GO" id="GO:0003755">
    <property type="term" value="F:peptidyl-prolyl cis-trans isomerase activity"/>
    <property type="evidence" value="ECO:0007669"/>
    <property type="project" value="UniProtKB-UniRule"/>
</dbReference>
<dbReference type="GO" id="GO:0044183">
    <property type="term" value="F:protein folding chaperone"/>
    <property type="evidence" value="ECO:0007669"/>
    <property type="project" value="TreeGrafter"/>
</dbReference>
<dbReference type="GO" id="GO:0043022">
    <property type="term" value="F:ribosome binding"/>
    <property type="evidence" value="ECO:0007669"/>
    <property type="project" value="TreeGrafter"/>
</dbReference>
<dbReference type="GO" id="GO:0051083">
    <property type="term" value="P:'de novo' cotranslational protein folding"/>
    <property type="evidence" value="ECO:0007669"/>
    <property type="project" value="TreeGrafter"/>
</dbReference>
<dbReference type="GO" id="GO:0051301">
    <property type="term" value="P:cell division"/>
    <property type="evidence" value="ECO:0007669"/>
    <property type="project" value="UniProtKB-KW"/>
</dbReference>
<dbReference type="GO" id="GO:0061077">
    <property type="term" value="P:chaperone-mediated protein folding"/>
    <property type="evidence" value="ECO:0007669"/>
    <property type="project" value="TreeGrafter"/>
</dbReference>
<dbReference type="GO" id="GO:0015031">
    <property type="term" value="P:protein transport"/>
    <property type="evidence" value="ECO:0007669"/>
    <property type="project" value="UniProtKB-UniRule"/>
</dbReference>
<dbReference type="GO" id="GO:0043335">
    <property type="term" value="P:protein unfolding"/>
    <property type="evidence" value="ECO:0007669"/>
    <property type="project" value="TreeGrafter"/>
</dbReference>
<dbReference type="FunFam" id="1.10.3120.10:FF:000001">
    <property type="entry name" value="Trigger factor"/>
    <property type="match status" value="1"/>
</dbReference>
<dbReference type="FunFam" id="3.10.50.40:FF:000001">
    <property type="entry name" value="Trigger factor"/>
    <property type="match status" value="1"/>
</dbReference>
<dbReference type="FunFam" id="3.30.70.1050:FF:000001">
    <property type="entry name" value="Trigger factor"/>
    <property type="match status" value="1"/>
</dbReference>
<dbReference type="Gene3D" id="3.10.50.40">
    <property type="match status" value="1"/>
</dbReference>
<dbReference type="Gene3D" id="3.30.70.1050">
    <property type="entry name" value="Trigger factor ribosome-binding domain"/>
    <property type="match status" value="1"/>
</dbReference>
<dbReference type="Gene3D" id="1.10.3120.10">
    <property type="entry name" value="Trigger factor, C-terminal domain"/>
    <property type="match status" value="1"/>
</dbReference>
<dbReference type="HAMAP" id="MF_00303">
    <property type="entry name" value="Trigger_factor_Tig"/>
    <property type="match status" value="1"/>
</dbReference>
<dbReference type="InterPro" id="IPR046357">
    <property type="entry name" value="PPIase_dom_sf"/>
</dbReference>
<dbReference type="InterPro" id="IPR001179">
    <property type="entry name" value="PPIase_FKBP_dom"/>
</dbReference>
<dbReference type="InterPro" id="IPR005215">
    <property type="entry name" value="Trig_fac"/>
</dbReference>
<dbReference type="InterPro" id="IPR008880">
    <property type="entry name" value="Trigger_fac_C"/>
</dbReference>
<dbReference type="InterPro" id="IPR037041">
    <property type="entry name" value="Trigger_fac_C_sf"/>
</dbReference>
<dbReference type="InterPro" id="IPR008881">
    <property type="entry name" value="Trigger_fac_ribosome-bd_bac"/>
</dbReference>
<dbReference type="InterPro" id="IPR036611">
    <property type="entry name" value="Trigger_fac_ribosome-bd_sf"/>
</dbReference>
<dbReference type="InterPro" id="IPR027304">
    <property type="entry name" value="Trigger_fact/SurA_dom_sf"/>
</dbReference>
<dbReference type="NCBIfam" id="TIGR00115">
    <property type="entry name" value="tig"/>
    <property type="match status" value="1"/>
</dbReference>
<dbReference type="PANTHER" id="PTHR30560">
    <property type="entry name" value="TRIGGER FACTOR CHAPERONE AND PEPTIDYL-PROLYL CIS/TRANS ISOMERASE"/>
    <property type="match status" value="1"/>
</dbReference>
<dbReference type="PANTHER" id="PTHR30560:SF3">
    <property type="entry name" value="TRIGGER FACTOR-LIKE PROTEIN TIG, CHLOROPLASTIC"/>
    <property type="match status" value="1"/>
</dbReference>
<dbReference type="Pfam" id="PF00254">
    <property type="entry name" value="FKBP_C"/>
    <property type="match status" value="1"/>
</dbReference>
<dbReference type="Pfam" id="PF05698">
    <property type="entry name" value="Trigger_C"/>
    <property type="match status" value="1"/>
</dbReference>
<dbReference type="Pfam" id="PF05697">
    <property type="entry name" value="Trigger_N"/>
    <property type="match status" value="1"/>
</dbReference>
<dbReference type="PIRSF" id="PIRSF003095">
    <property type="entry name" value="Trigger_factor"/>
    <property type="match status" value="1"/>
</dbReference>
<dbReference type="SUPFAM" id="SSF54534">
    <property type="entry name" value="FKBP-like"/>
    <property type="match status" value="1"/>
</dbReference>
<dbReference type="SUPFAM" id="SSF109998">
    <property type="entry name" value="Triger factor/SurA peptide-binding domain-like"/>
    <property type="match status" value="1"/>
</dbReference>
<dbReference type="SUPFAM" id="SSF102735">
    <property type="entry name" value="Trigger factor ribosome-binding domain"/>
    <property type="match status" value="1"/>
</dbReference>
<dbReference type="PROSITE" id="PS50059">
    <property type="entry name" value="FKBP_PPIASE"/>
    <property type="match status" value="1"/>
</dbReference>
<name>TIG_ECOLU</name>
<reference key="1">
    <citation type="journal article" date="2009" name="PLoS Genet.">
        <title>Organised genome dynamics in the Escherichia coli species results in highly diverse adaptive paths.</title>
        <authorList>
            <person name="Touchon M."/>
            <person name="Hoede C."/>
            <person name="Tenaillon O."/>
            <person name="Barbe V."/>
            <person name="Baeriswyl S."/>
            <person name="Bidet P."/>
            <person name="Bingen E."/>
            <person name="Bonacorsi S."/>
            <person name="Bouchier C."/>
            <person name="Bouvet O."/>
            <person name="Calteau A."/>
            <person name="Chiapello H."/>
            <person name="Clermont O."/>
            <person name="Cruveiller S."/>
            <person name="Danchin A."/>
            <person name="Diard M."/>
            <person name="Dossat C."/>
            <person name="Karoui M.E."/>
            <person name="Frapy E."/>
            <person name="Garry L."/>
            <person name="Ghigo J.M."/>
            <person name="Gilles A.M."/>
            <person name="Johnson J."/>
            <person name="Le Bouguenec C."/>
            <person name="Lescat M."/>
            <person name="Mangenot S."/>
            <person name="Martinez-Jehanne V."/>
            <person name="Matic I."/>
            <person name="Nassif X."/>
            <person name="Oztas S."/>
            <person name="Petit M.A."/>
            <person name="Pichon C."/>
            <person name="Rouy Z."/>
            <person name="Ruf C.S."/>
            <person name="Schneider D."/>
            <person name="Tourret J."/>
            <person name="Vacherie B."/>
            <person name="Vallenet D."/>
            <person name="Medigue C."/>
            <person name="Rocha E.P.C."/>
            <person name="Denamur E."/>
        </authorList>
    </citation>
    <scope>NUCLEOTIDE SEQUENCE [LARGE SCALE GENOMIC DNA]</scope>
    <source>
        <strain>UMN026 / ExPEC</strain>
    </source>
</reference>
<gene>
    <name evidence="1" type="primary">tig</name>
    <name type="ordered locus">ECUMN_0476</name>
</gene>
<sequence length="432" mass="48193">MQVSVETTQGLGRRVTITIAADSIETAVKSELVNVAKKVRIDGFRKGKVPMNIVAQRYGASVRQDVLGDLMSRNFIDAIIKEKINPAGAPTYVPGEYKLGEDFTYSVEFEVYPEVELQGLEAIEVEKPIVEVTDADVDGMLDTLRKQQATWKEKDGAVEAEDRVTIDFTGSVDGEEFEGGKASDFVLAMGQGRMIPGFEDGIKGHKAGEEFTIDVTFPEEYHAENLKGKAAKFAINLKKVEERELPELTAEFIKRFGVEDGSVEGLRAEVRKNMERELKSAIRNRVKSQAIEGLVKANDIDVPAALIDSEIDVLRRQAAQRFGGNEKQALELPRELFEEQAKRRVVVGLLLGEVIRTNELKADEERVKGLIEEMASAYEDPKEVIEFYSKNKELMDNMRNVALEEQAVEAVLAKAKVTEKETTFNELMNQQA</sequence>
<evidence type="ECO:0000255" key="1">
    <source>
        <dbReference type="HAMAP-Rule" id="MF_00303"/>
    </source>
</evidence>
<accession>B7N8Z0</accession>
<keyword id="KW-0131">Cell cycle</keyword>
<keyword id="KW-0132">Cell division</keyword>
<keyword id="KW-0143">Chaperone</keyword>
<keyword id="KW-0963">Cytoplasm</keyword>
<keyword id="KW-0413">Isomerase</keyword>
<keyword id="KW-0697">Rotamase</keyword>
<comment type="function">
    <text evidence="1">Involved in protein export. Acts as a chaperone by maintaining the newly synthesized protein in an open conformation. Functions as a peptidyl-prolyl cis-trans isomerase.</text>
</comment>
<comment type="catalytic activity">
    <reaction evidence="1">
        <text>[protein]-peptidylproline (omega=180) = [protein]-peptidylproline (omega=0)</text>
        <dbReference type="Rhea" id="RHEA:16237"/>
        <dbReference type="Rhea" id="RHEA-COMP:10747"/>
        <dbReference type="Rhea" id="RHEA-COMP:10748"/>
        <dbReference type="ChEBI" id="CHEBI:83833"/>
        <dbReference type="ChEBI" id="CHEBI:83834"/>
        <dbReference type="EC" id="5.2.1.8"/>
    </reaction>
</comment>
<comment type="subunit">
    <text evidence="1">Homodimer and monomer. In vivo most of the ribosomes are in complex with monomeric TF. Uncomplexed TF, however, is in a monomer-dimer equilibrium with approximately two thirds of TF existing in a dimeric state.</text>
</comment>
<comment type="subcellular location">
    <subcellularLocation>
        <location>Cytoplasm</location>
    </subcellularLocation>
    <text evidence="1">About half TF is bound to the ribosome near the polypeptide exit tunnel while the other half is free in the cytoplasm.</text>
</comment>
<comment type="domain">
    <text evidence="1">Consists of 3 domains; the N-terminus binds the ribosome, the middle domain has PPIase activity, while the C-terminus has intrinsic chaperone activity on its own.</text>
</comment>
<comment type="similarity">
    <text evidence="1">Belongs to the FKBP-type PPIase family. Tig subfamily.</text>
</comment>
<organism>
    <name type="scientific">Escherichia coli O17:K52:H18 (strain UMN026 / ExPEC)</name>
    <dbReference type="NCBI Taxonomy" id="585056"/>
    <lineage>
        <taxon>Bacteria</taxon>
        <taxon>Pseudomonadati</taxon>
        <taxon>Pseudomonadota</taxon>
        <taxon>Gammaproteobacteria</taxon>
        <taxon>Enterobacterales</taxon>
        <taxon>Enterobacteriaceae</taxon>
        <taxon>Escherichia</taxon>
    </lineage>
</organism>